<dbReference type="EMBL" id="AJ579715">
    <property type="protein sequence ID" value="CAE30452.2"/>
    <property type="molecule type" value="Genomic_DNA"/>
</dbReference>
<dbReference type="EMBL" id="CR382132">
    <property type="protein sequence ID" value="CAG77799.1"/>
    <property type="molecule type" value="Genomic_DNA"/>
</dbReference>
<dbReference type="RefSeq" id="XP_504992.1">
    <property type="nucleotide sequence ID" value="XM_504992.1"/>
</dbReference>
<dbReference type="SMR" id="Q6C2X0"/>
<dbReference type="FunCoup" id="Q6C2X0">
    <property type="interactions" value="439"/>
</dbReference>
<dbReference type="STRING" id="284591.Q6C2X0"/>
<dbReference type="EnsemblFungi" id="CAG77799">
    <property type="protein sequence ID" value="CAG77799"/>
    <property type="gene ID" value="YALI0_F04422g"/>
</dbReference>
<dbReference type="KEGG" id="yli:2908883"/>
<dbReference type="VEuPathDB" id="FungiDB:YALI0_F04422g"/>
<dbReference type="HOGENOM" id="CLU_018310_0_1_1"/>
<dbReference type="InParanoid" id="Q6C2X0"/>
<dbReference type="OMA" id="SQTRCVG"/>
<dbReference type="OrthoDB" id="97064at4891"/>
<dbReference type="Proteomes" id="UP000001300">
    <property type="component" value="Chromosome F"/>
</dbReference>
<dbReference type="GO" id="GO:0005952">
    <property type="term" value="C:cAMP-dependent protein kinase complex"/>
    <property type="evidence" value="ECO:0000318"/>
    <property type="project" value="GO_Central"/>
</dbReference>
<dbReference type="GO" id="GO:0000785">
    <property type="term" value="C:chromatin"/>
    <property type="evidence" value="ECO:0007669"/>
    <property type="project" value="EnsemblFungi"/>
</dbReference>
<dbReference type="GO" id="GO:0005829">
    <property type="term" value="C:cytosol"/>
    <property type="evidence" value="ECO:0000318"/>
    <property type="project" value="GO_Central"/>
</dbReference>
<dbReference type="GO" id="GO:0005634">
    <property type="term" value="C:nucleus"/>
    <property type="evidence" value="ECO:0000318"/>
    <property type="project" value="GO_Central"/>
</dbReference>
<dbReference type="GO" id="GO:0005886">
    <property type="term" value="C:plasma membrane"/>
    <property type="evidence" value="ECO:0007669"/>
    <property type="project" value="EnsemblFungi"/>
</dbReference>
<dbReference type="GO" id="GO:0030552">
    <property type="term" value="F:cAMP binding"/>
    <property type="evidence" value="ECO:0000318"/>
    <property type="project" value="GO_Central"/>
</dbReference>
<dbReference type="GO" id="GO:0004862">
    <property type="term" value="F:cAMP-dependent protein kinase inhibitor activity"/>
    <property type="evidence" value="ECO:0000318"/>
    <property type="project" value="GO_Central"/>
</dbReference>
<dbReference type="GO" id="GO:0042802">
    <property type="term" value="F:identical protein binding"/>
    <property type="evidence" value="ECO:0007669"/>
    <property type="project" value="EnsemblFungi"/>
</dbReference>
<dbReference type="GO" id="GO:0034236">
    <property type="term" value="F:protein kinase A catalytic subunit binding"/>
    <property type="evidence" value="ECO:0000318"/>
    <property type="project" value="GO_Central"/>
</dbReference>
<dbReference type="GO" id="GO:0007189">
    <property type="term" value="P:adenylate cyclase-activating G protein-coupled receptor signaling pathway"/>
    <property type="evidence" value="ECO:0000318"/>
    <property type="project" value="GO_Central"/>
</dbReference>
<dbReference type="GO" id="GO:0042149">
    <property type="term" value="P:cellular response to glucose starvation"/>
    <property type="evidence" value="ECO:0007669"/>
    <property type="project" value="EnsemblFungi"/>
</dbReference>
<dbReference type="GO" id="GO:0006995">
    <property type="term" value="P:cellular response to nitrogen starvation"/>
    <property type="evidence" value="ECO:0007669"/>
    <property type="project" value="EnsemblFungi"/>
</dbReference>
<dbReference type="GO" id="GO:0046580">
    <property type="term" value="P:negative regulation of Ras protein signal transduction"/>
    <property type="evidence" value="ECO:0007669"/>
    <property type="project" value="EnsemblFungi"/>
</dbReference>
<dbReference type="GO" id="GO:0046827">
    <property type="term" value="P:positive regulation of protein export from nucleus"/>
    <property type="evidence" value="ECO:0007669"/>
    <property type="project" value="EnsemblFungi"/>
</dbReference>
<dbReference type="GO" id="GO:0045944">
    <property type="term" value="P:positive regulation of transcription by RNA polymerase II"/>
    <property type="evidence" value="ECO:0007669"/>
    <property type="project" value="EnsemblFungi"/>
</dbReference>
<dbReference type="GO" id="GO:0097271">
    <property type="term" value="P:protein localization to bud neck"/>
    <property type="evidence" value="ECO:0007669"/>
    <property type="project" value="EnsemblFungi"/>
</dbReference>
<dbReference type="GO" id="GO:0010603">
    <property type="term" value="P:regulation of cytoplasmic mRNA processing body assembly"/>
    <property type="evidence" value="ECO:0007669"/>
    <property type="project" value="EnsemblFungi"/>
</dbReference>
<dbReference type="CDD" id="cd00038">
    <property type="entry name" value="CAP_ED"/>
    <property type="match status" value="2"/>
</dbReference>
<dbReference type="CDD" id="cd12098">
    <property type="entry name" value="DD_R_ScPKA-like"/>
    <property type="match status" value="1"/>
</dbReference>
<dbReference type="FunFam" id="2.60.120.10:FF:000039">
    <property type="entry name" value="cAMP-dependent protein kinase regulatory subunit"/>
    <property type="match status" value="1"/>
</dbReference>
<dbReference type="Gene3D" id="2.60.120.10">
    <property type="entry name" value="Jelly Rolls"/>
    <property type="match status" value="2"/>
</dbReference>
<dbReference type="InterPro" id="IPR050503">
    <property type="entry name" value="cAMP-dep_PK_reg_su-like"/>
</dbReference>
<dbReference type="InterPro" id="IPR012198">
    <property type="entry name" value="cAMP_dep_PK_reg_su"/>
</dbReference>
<dbReference type="InterPro" id="IPR003117">
    <property type="entry name" value="cAMP_dep_PK_reg_su_I/II_a/b"/>
</dbReference>
<dbReference type="InterPro" id="IPR018488">
    <property type="entry name" value="cNMP-bd_CS"/>
</dbReference>
<dbReference type="InterPro" id="IPR000595">
    <property type="entry name" value="cNMP-bd_dom"/>
</dbReference>
<dbReference type="InterPro" id="IPR018490">
    <property type="entry name" value="cNMP-bd_dom_sf"/>
</dbReference>
<dbReference type="InterPro" id="IPR014710">
    <property type="entry name" value="RmlC-like_jellyroll"/>
</dbReference>
<dbReference type="PANTHER" id="PTHR11635">
    <property type="entry name" value="CAMP-DEPENDENT PROTEIN KINASE REGULATORY CHAIN"/>
    <property type="match status" value="1"/>
</dbReference>
<dbReference type="PANTHER" id="PTHR11635:SF152">
    <property type="entry name" value="CAMP-DEPENDENT PROTEIN KINASE TYPE I REGULATORY SUBUNIT-RELATED"/>
    <property type="match status" value="1"/>
</dbReference>
<dbReference type="Pfam" id="PF00027">
    <property type="entry name" value="cNMP_binding"/>
    <property type="match status" value="2"/>
</dbReference>
<dbReference type="Pfam" id="PF02197">
    <property type="entry name" value="RIIa"/>
    <property type="match status" value="1"/>
</dbReference>
<dbReference type="PIRSF" id="PIRSF000548">
    <property type="entry name" value="PK_regulatory"/>
    <property type="match status" value="1"/>
</dbReference>
<dbReference type="PRINTS" id="PR00103">
    <property type="entry name" value="CAMPKINASE"/>
</dbReference>
<dbReference type="SMART" id="SM00100">
    <property type="entry name" value="cNMP"/>
    <property type="match status" value="2"/>
</dbReference>
<dbReference type="SMART" id="SM00394">
    <property type="entry name" value="RIIa"/>
    <property type="match status" value="1"/>
</dbReference>
<dbReference type="SUPFAM" id="SSF51206">
    <property type="entry name" value="cAMP-binding domain-like"/>
    <property type="match status" value="2"/>
</dbReference>
<dbReference type="SUPFAM" id="SSF47391">
    <property type="entry name" value="Dimerization-anchoring domain of cAMP-dependent PK regulatory subunit"/>
    <property type="match status" value="1"/>
</dbReference>
<dbReference type="PROSITE" id="PS00888">
    <property type="entry name" value="CNMP_BINDING_1"/>
    <property type="match status" value="2"/>
</dbReference>
<dbReference type="PROSITE" id="PS00889">
    <property type="entry name" value="CNMP_BINDING_2"/>
    <property type="match status" value="2"/>
</dbReference>
<dbReference type="PROSITE" id="PS50042">
    <property type="entry name" value="CNMP_BINDING_3"/>
    <property type="match status" value="2"/>
</dbReference>
<reference key="1">
    <citation type="submission" date="2004-07" db="EMBL/GenBank/DDBJ databases">
        <authorList>
            <person name="Cervantes J.A."/>
        </authorList>
    </citation>
    <scope>NUCLEOTIDE SEQUENCE [GENOMIC DNA]</scope>
    <source>
        <strain>E 129</strain>
    </source>
</reference>
<reference key="2">
    <citation type="journal article" date="2004" name="Nature">
        <title>Genome evolution in yeasts.</title>
        <authorList>
            <person name="Dujon B."/>
            <person name="Sherman D."/>
            <person name="Fischer G."/>
            <person name="Durrens P."/>
            <person name="Casaregola S."/>
            <person name="Lafontaine I."/>
            <person name="de Montigny J."/>
            <person name="Marck C."/>
            <person name="Neuveglise C."/>
            <person name="Talla E."/>
            <person name="Goffard N."/>
            <person name="Frangeul L."/>
            <person name="Aigle M."/>
            <person name="Anthouard V."/>
            <person name="Babour A."/>
            <person name="Barbe V."/>
            <person name="Barnay S."/>
            <person name="Blanchin S."/>
            <person name="Beckerich J.-M."/>
            <person name="Beyne E."/>
            <person name="Bleykasten C."/>
            <person name="Boisrame A."/>
            <person name="Boyer J."/>
            <person name="Cattolico L."/>
            <person name="Confanioleri F."/>
            <person name="de Daruvar A."/>
            <person name="Despons L."/>
            <person name="Fabre E."/>
            <person name="Fairhead C."/>
            <person name="Ferry-Dumazet H."/>
            <person name="Groppi A."/>
            <person name="Hantraye F."/>
            <person name="Hennequin C."/>
            <person name="Jauniaux N."/>
            <person name="Joyet P."/>
            <person name="Kachouri R."/>
            <person name="Kerrest A."/>
            <person name="Koszul R."/>
            <person name="Lemaire M."/>
            <person name="Lesur I."/>
            <person name="Ma L."/>
            <person name="Muller H."/>
            <person name="Nicaud J.-M."/>
            <person name="Nikolski M."/>
            <person name="Oztas S."/>
            <person name="Ozier-Kalogeropoulos O."/>
            <person name="Pellenz S."/>
            <person name="Potier S."/>
            <person name="Richard G.-F."/>
            <person name="Straub M.-L."/>
            <person name="Suleau A."/>
            <person name="Swennen D."/>
            <person name="Tekaia F."/>
            <person name="Wesolowski-Louvel M."/>
            <person name="Westhof E."/>
            <person name="Wirth B."/>
            <person name="Zeniou-Meyer M."/>
            <person name="Zivanovic Y."/>
            <person name="Bolotin-Fukuhara M."/>
            <person name="Thierry A."/>
            <person name="Bouchier C."/>
            <person name="Caudron B."/>
            <person name="Scarpelli C."/>
            <person name="Gaillardin C."/>
            <person name="Weissenbach J."/>
            <person name="Wincker P."/>
            <person name="Souciet J.-L."/>
        </authorList>
    </citation>
    <scope>NUCLEOTIDE SEQUENCE [LARGE SCALE GENOMIC DNA]</scope>
    <source>
        <strain>CLIB 122 / E 150</strain>
    </source>
</reference>
<gene>
    <name type="primary">PKAR</name>
    <name type="ordered locus">YALI0F04422g</name>
</gene>
<sequence length="375" mass="40268">MTLPPAYVDELNLLNREVTTKQPTDILRFCADYFNERLAKREEADDDGPRSKPLGGGFREPGFGSSSRSTDGSLFRSSFADTSSEGPGSASSEPAAPFTRRTSVSAESIAPGAFAGAASGVASNNLSAEQLESLYKSVSHNFLFGNLDEEACRSVLQSLQEKKCDSGEKIITQGDEGDYFYIVESGAVEFIKDGVKVNSSGPGSSFGELALMYNAPRAATVVATQPCVLWSLDRVTFRKILLDGTHQRRSMYDGFLKEVPILSDLGSYERNKLADALTSQVVEPGTAVITEGEAGDAFYLVESGEAEVTKKGESGVVATLKQGDYFGEVALLNDLPRQATVTAKTKLKVATLGKDGFQRLLGPVLDHLKENDPTK</sequence>
<comment type="subunit">
    <text evidence="1">Tetramer, composed of 2 regulatory (R) and 2 catalytic (C) subunits. In the presence of cAMP it dissociates into 2 active monomeric C subunits and an R dimer (By similarity).</text>
</comment>
<comment type="similarity">
    <text evidence="4">Belongs to the cAMP-dependent kinase regulatory chain family.</text>
</comment>
<name>KAPR_YARLI</name>
<keyword id="KW-0114">cAMP</keyword>
<keyword id="KW-0116">cAMP-binding</keyword>
<keyword id="KW-0547">Nucleotide-binding</keyword>
<keyword id="KW-0597">Phosphoprotein</keyword>
<keyword id="KW-1185">Reference proteome</keyword>
<keyword id="KW-0677">Repeat</keyword>
<feature type="chain" id="PRO_0000205417" description="cAMP-dependent protein kinase regulatory subunit">
    <location>
        <begin position="1"/>
        <end position="375"/>
    </location>
</feature>
<feature type="region of interest" description="Dimerization and phosphorylation" evidence="2">
    <location>
        <begin position="28"/>
        <end position="142"/>
    </location>
</feature>
<feature type="region of interest" description="Disordered" evidence="3">
    <location>
        <begin position="41"/>
        <end position="102"/>
    </location>
</feature>
<feature type="compositionally biased region" description="Basic and acidic residues" evidence="3">
    <location>
        <begin position="41"/>
        <end position="50"/>
    </location>
</feature>
<feature type="compositionally biased region" description="Polar residues" evidence="3">
    <location>
        <begin position="64"/>
        <end position="82"/>
    </location>
</feature>
<feature type="compositionally biased region" description="Low complexity" evidence="3">
    <location>
        <begin position="83"/>
        <end position="97"/>
    </location>
</feature>
<feature type="binding site">
    <location>
        <begin position="143"/>
        <end position="258"/>
    </location>
    <ligand>
        <name>3',5'-cyclic AMP</name>
        <dbReference type="ChEBI" id="CHEBI:58165"/>
        <label>1</label>
    </ligand>
</feature>
<feature type="binding site" evidence="1">
    <location>
        <position position="208"/>
    </location>
    <ligand>
        <name>3',5'-cyclic AMP</name>
        <dbReference type="ChEBI" id="CHEBI:58165"/>
        <label>1</label>
    </ligand>
</feature>
<feature type="binding site" evidence="1">
    <location>
        <position position="217"/>
    </location>
    <ligand>
        <name>3',5'-cyclic AMP</name>
        <dbReference type="ChEBI" id="CHEBI:58165"/>
        <label>1</label>
    </ligand>
</feature>
<feature type="binding site">
    <location>
        <begin position="261"/>
        <end position="375"/>
    </location>
    <ligand>
        <name>3',5'-cyclic AMP</name>
        <dbReference type="ChEBI" id="CHEBI:58165"/>
        <label>2</label>
    </ligand>
</feature>
<feature type="binding site" evidence="1">
    <location>
        <position position="328"/>
    </location>
    <ligand>
        <name>3',5'-cyclic AMP</name>
        <dbReference type="ChEBI" id="CHEBI:58165"/>
        <label>2</label>
    </ligand>
</feature>
<feature type="binding site" evidence="1">
    <location>
        <position position="337"/>
    </location>
    <ligand>
        <name>3',5'-cyclic AMP</name>
        <dbReference type="ChEBI" id="CHEBI:58165"/>
        <label>2</label>
    </ligand>
</feature>
<feature type="modified residue" description="Phosphoserine" evidence="1">
    <location>
        <position position="103"/>
    </location>
</feature>
<feature type="sequence conflict" description="In Ref. 1." evidence="4" ref="1">
    <original>M</original>
    <variation>MAKRLMVISQPRRSFRILSNPV</variation>
    <location>
        <position position="1"/>
    </location>
</feature>
<feature type="sequence conflict" description="In Ref. 1; CAE30452." evidence="4" ref="1">
    <original>QPTDILRFCADYFNERLAKREEADDDGPRS</original>
    <variation>RSRPTFCGSARTISTNGWPNEKRLTTTDPVP</variation>
    <location>
        <begin position="22"/>
        <end position="51"/>
    </location>
</feature>
<proteinExistence type="inferred from homology"/>
<accession>Q6C2X0</accession>
<accession>Q70IV2</accession>
<evidence type="ECO:0000250" key="1"/>
<evidence type="ECO:0000255" key="2"/>
<evidence type="ECO:0000256" key="3">
    <source>
        <dbReference type="SAM" id="MobiDB-lite"/>
    </source>
</evidence>
<evidence type="ECO:0000305" key="4"/>
<protein>
    <recommendedName>
        <fullName>cAMP-dependent protein kinase regulatory subunit</fullName>
        <shortName>PKA regulatory subunit</shortName>
    </recommendedName>
</protein>
<organism>
    <name type="scientific">Yarrowia lipolytica (strain CLIB 122 / E 150)</name>
    <name type="common">Yeast</name>
    <name type="synonym">Candida lipolytica</name>
    <dbReference type="NCBI Taxonomy" id="284591"/>
    <lineage>
        <taxon>Eukaryota</taxon>
        <taxon>Fungi</taxon>
        <taxon>Dikarya</taxon>
        <taxon>Ascomycota</taxon>
        <taxon>Saccharomycotina</taxon>
        <taxon>Dipodascomycetes</taxon>
        <taxon>Dipodascales</taxon>
        <taxon>Dipodascales incertae sedis</taxon>
        <taxon>Yarrowia</taxon>
    </lineage>
</organism>